<comment type="function">
    <text evidence="1">Catalyzes the reversible isomerization of glucose-6-phosphate to fructose-6-phosphate.</text>
</comment>
<comment type="catalytic activity">
    <reaction evidence="1">
        <text>alpha-D-glucose 6-phosphate = beta-D-fructose 6-phosphate</text>
        <dbReference type="Rhea" id="RHEA:11816"/>
        <dbReference type="ChEBI" id="CHEBI:57634"/>
        <dbReference type="ChEBI" id="CHEBI:58225"/>
        <dbReference type="EC" id="5.3.1.9"/>
    </reaction>
</comment>
<comment type="pathway">
    <text evidence="1">Carbohydrate biosynthesis; gluconeogenesis.</text>
</comment>
<comment type="pathway">
    <text evidence="1">Carbohydrate degradation; glycolysis; D-glyceraldehyde 3-phosphate and glycerone phosphate from D-glucose: step 2/4.</text>
</comment>
<comment type="subcellular location">
    <subcellularLocation>
        <location evidence="1">Cytoplasm</location>
    </subcellularLocation>
</comment>
<comment type="similarity">
    <text evidence="1">Belongs to the GPI family.</text>
</comment>
<organism>
    <name type="scientific">Desulforapulum autotrophicum (strain ATCC 43914 / DSM 3382 / VKM B-1955 / HRM2)</name>
    <name type="common">Desulfobacterium autotrophicum</name>
    <dbReference type="NCBI Taxonomy" id="177437"/>
    <lineage>
        <taxon>Bacteria</taxon>
        <taxon>Pseudomonadati</taxon>
        <taxon>Thermodesulfobacteriota</taxon>
        <taxon>Desulfobacteria</taxon>
        <taxon>Desulfobacterales</taxon>
        <taxon>Desulfobacteraceae</taxon>
        <taxon>Desulforapulum</taxon>
    </lineage>
</organism>
<protein>
    <recommendedName>
        <fullName evidence="1">Glucose-6-phosphate isomerase</fullName>
        <shortName evidence="1">GPI</shortName>
        <ecNumber evidence="1">5.3.1.9</ecNumber>
    </recommendedName>
    <alternativeName>
        <fullName evidence="1">Phosphoglucose isomerase</fullName>
        <shortName evidence="1">PGI</shortName>
    </alternativeName>
    <alternativeName>
        <fullName evidence="1">Phosphohexose isomerase</fullName>
        <shortName evidence="1">PHI</shortName>
    </alternativeName>
</protein>
<proteinExistence type="inferred from homology"/>
<sequence length="555" mass="61596">MLKKIDPAQTESWKRLGRHYDGVKDLAMDDLFQQDPDRFKRLSMAFKDMVVDVSKNRITDKTLALLMDLARETGVKEAIAMMFRGDRINETEGRSVLHVALRNLADTPVLVDGKDVMPGVRGVLEQMRLFSTRVYSGQQTGYSNRTITDIVNIGIGGSDLGPKMVATALAPYARKGLNVHFVSNVDGTHIVETLKGLDPATTLFIIASKTFTTQETMTNAASARQWFLEGAGDPGHVAQHFVAISTNAAAVEAFGIDRDNMFGFWDWVGGRYSLWSAIGLSVACYIGFDNFKRLLKGGFDMDCHFRDTPLEQNIPVVLAMISIWYVNFFNFPTEAVLPYDQGLEYFPAYLQQACMESNGKSTDRNGNLVAHATSPIVWGEPGTNGQHAFYQLLHQGTQIVPCDFLVPAISHNPLGDHHALLVANCFAQAEALMKGRGEQEVTREMTAKGMDGEKLGRLLPHRVFHGNRPSNTIVFKQLTPEVLGAIIAMYEHKIFVQGVVWNIFSFDQWGVELGKALASQIFPELADHETVVTHDGSTNGLINVFKQMRSKTCRS</sequence>
<feature type="chain" id="PRO_1000206362" description="Glucose-6-phosphate isomerase">
    <location>
        <begin position="1"/>
        <end position="555"/>
    </location>
</feature>
<feature type="active site" description="Proton donor" evidence="1">
    <location>
        <position position="356"/>
    </location>
</feature>
<feature type="active site" evidence="1">
    <location>
        <position position="387"/>
    </location>
</feature>
<feature type="active site" evidence="1">
    <location>
        <position position="515"/>
    </location>
</feature>
<reference key="1">
    <citation type="journal article" date="2009" name="Environ. Microbiol.">
        <title>Genome sequence of Desulfobacterium autotrophicum HRM2, a marine sulfate reducer oxidizing organic carbon completely to carbon dioxide.</title>
        <authorList>
            <person name="Strittmatter A.W."/>
            <person name="Liesegang H."/>
            <person name="Rabus R."/>
            <person name="Decker I."/>
            <person name="Amann J."/>
            <person name="Andres S."/>
            <person name="Henne A."/>
            <person name="Fricke W.F."/>
            <person name="Martinez-Arias R."/>
            <person name="Bartels D."/>
            <person name="Goesmann A."/>
            <person name="Krause L."/>
            <person name="Puehler A."/>
            <person name="Klenk H.P."/>
            <person name="Richter M."/>
            <person name="Schuler M."/>
            <person name="Gloeckner F.O."/>
            <person name="Meyerdierks A."/>
            <person name="Gottschalk G."/>
            <person name="Amann R."/>
        </authorList>
    </citation>
    <scope>NUCLEOTIDE SEQUENCE [LARGE SCALE GENOMIC DNA]</scope>
    <source>
        <strain>ATCC 43914 / DSM 3382 / VKM B-1955 / HRM2</strain>
    </source>
</reference>
<accession>C0QL01</accession>
<keyword id="KW-0963">Cytoplasm</keyword>
<keyword id="KW-0312">Gluconeogenesis</keyword>
<keyword id="KW-0324">Glycolysis</keyword>
<keyword id="KW-0413">Isomerase</keyword>
<keyword id="KW-1185">Reference proteome</keyword>
<name>G6PI_DESAH</name>
<gene>
    <name evidence="1" type="primary">pgi</name>
    <name type="ordered locus">HRM2_31600</name>
</gene>
<dbReference type="EC" id="5.3.1.9" evidence="1"/>
<dbReference type="EMBL" id="CP001087">
    <property type="protein sequence ID" value="ACN16241.1"/>
    <property type="molecule type" value="Genomic_DNA"/>
</dbReference>
<dbReference type="RefSeq" id="WP_015905003.1">
    <property type="nucleotide sequence ID" value="NC_012108.1"/>
</dbReference>
<dbReference type="SMR" id="C0QL01"/>
<dbReference type="STRING" id="177437.HRM2_31600"/>
<dbReference type="KEGG" id="dat:HRM2_31600"/>
<dbReference type="eggNOG" id="COG0166">
    <property type="taxonomic scope" value="Bacteria"/>
</dbReference>
<dbReference type="HOGENOM" id="CLU_017947_3_1_7"/>
<dbReference type="OrthoDB" id="140919at2"/>
<dbReference type="UniPathway" id="UPA00109">
    <property type="reaction ID" value="UER00181"/>
</dbReference>
<dbReference type="UniPathway" id="UPA00138"/>
<dbReference type="Proteomes" id="UP000000442">
    <property type="component" value="Chromosome"/>
</dbReference>
<dbReference type="GO" id="GO:0005829">
    <property type="term" value="C:cytosol"/>
    <property type="evidence" value="ECO:0007669"/>
    <property type="project" value="TreeGrafter"/>
</dbReference>
<dbReference type="GO" id="GO:0097367">
    <property type="term" value="F:carbohydrate derivative binding"/>
    <property type="evidence" value="ECO:0007669"/>
    <property type="project" value="InterPro"/>
</dbReference>
<dbReference type="GO" id="GO:0004347">
    <property type="term" value="F:glucose-6-phosphate isomerase activity"/>
    <property type="evidence" value="ECO:0007669"/>
    <property type="project" value="UniProtKB-UniRule"/>
</dbReference>
<dbReference type="GO" id="GO:0048029">
    <property type="term" value="F:monosaccharide binding"/>
    <property type="evidence" value="ECO:0007669"/>
    <property type="project" value="TreeGrafter"/>
</dbReference>
<dbReference type="GO" id="GO:0006094">
    <property type="term" value="P:gluconeogenesis"/>
    <property type="evidence" value="ECO:0007669"/>
    <property type="project" value="UniProtKB-UniRule"/>
</dbReference>
<dbReference type="GO" id="GO:0051156">
    <property type="term" value="P:glucose 6-phosphate metabolic process"/>
    <property type="evidence" value="ECO:0007669"/>
    <property type="project" value="TreeGrafter"/>
</dbReference>
<dbReference type="GO" id="GO:0006096">
    <property type="term" value="P:glycolytic process"/>
    <property type="evidence" value="ECO:0007669"/>
    <property type="project" value="UniProtKB-UniRule"/>
</dbReference>
<dbReference type="CDD" id="cd05015">
    <property type="entry name" value="SIS_PGI_1"/>
    <property type="match status" value="1"/>
</dbReference>
<dbReference type="CDD" id="cd05016">
    <property type="entry name" value="SIS_PGI_2"/>
    <property type="match status" value="1"/>
</dbReference>
<dbReference type="FunFam" id="1.10.1390.10:FF:000001">
    <property type="entry name" value="Glucose-6-phosphate isomerase"/>
    <property type="match status" value="1"/>
</dbReference>
<dbReference type="FunFam" id="3.40.50.10490:FF:000004">
    <property type="entry name" value="Glucose-6-phosphate isomerase"/>
    <property type="match status" value="1"/>
</dbReference>
<dbReference type="Gene3D" id="1.10.1390.10">
    <property type="match status" value="1"/>
</dbReference>
<dbReference type="Gene3D" id="3.40.50.10490">
    <property type="entry name" value="Glucose-6-phosphate isomerase like protein, domain 1"/>
    <property type="match status" value="2"/>
</dbReference>
<dbReference type="HAMAP" id="MF_00473">
    <property type="entry name" value="G6P_isomerase"/>
    <property type="match status" value="1"/>
</dbReference>
<dbReference type="InterPro" id="IPR001672">
    <property type="entry name" value="G6P_Isomerase"/>
</dbReference>
<dbReference type="InterPro" id="IPR023096">
    <property type="entry name" value="G6P_Isomerase_C"/>
</dbReference>
<dbReference type="InterPro" id="IPR018189">
    <property type="entry name" value="Phosphoglucose_isomerase_CS"/>
</dbReference>
<dbReference type="InterPro" id="IPR046348">
    <property type="entry name" value="SIS_dom_sf"/>
</dbReference>
<dbReference type="InterPro" id="IPR035476">
    <property type="entry name" value="SIS_PGI_1"/>
</dbReference>
<dbReference type="InterPro" id="IPR035482">
    <property type="entry name" value="SIS_PGI_2"/>
</dbReference>
<dbReference type="NCBIfam" id="NF001211">
    <property type="entry name" value="PRK00179.1"/>
    <property type="match status" value="1"/>
</dbReference>
<dbReference type="PANTHER" id="PTHR11469">
    <property type="entry name" value="GLUCOSE-6-PHOSPHATE ISOMERASE"/>
    <property type="match status" value="1"/>
</dbReference>
<dbReference type="PANTHER" id="PTHR11469:SF1">
    <property type="entry name" value="GLUCOSE-6-PHOSPHATE ISOMERASE"/>
    <property type="match status" value="1"/>
</dbReference>
<dbReference type="Pfam" id="PF00342">
    <property type="entry name" value="PGI"/>
    <property type="match status" value="1"/>
</dbReference>
<dbReference type="PRINTS" id="PR00662">
    <property type="entry name" value="G6PISOMERASE"/>
</dbReference>
<dbReference type="SUPFAM" id="SSF53697">
    <property type="entry name" value="SIS domain"/>
    <property type="match status" value="1"/>
</dbReference>
<dbReference type="PROSITE" id="PS00765">
    <property type="entry name" value="P_GLUCOSE_ISOMERASE_1"/>
    <property type="match status" value="1"/>
</dbReference>
<dbReference type="PROSITE" id="PS00174">
    <property type="entry name" value="P_GLUCOSE_ISOMERASE_2"/>
    <property type="match status" value="1"/>
</dbReference>
<dbReference type="PROSITE" id="PS51463">
    <property type="entry name" value="P_GLUCOSE_ISOMERASE_3"/>
    <property type="match status" value="1"/>
</dbReference>
<evidence type="ECO:0000255" key="1">
    <source>
        <dbReference type="HAMAP-Rule" id="MF_00473"/>
    </source>
</evidence>